<feature type="chain" id="PRO_0000303356" description="tRNA N6-adenosine threonylcarbamoyltransferase">
    <location>
        <begin position="1"/>
        <end position="348"/>
    </location>
</feature>
<feature type="binding site" evidence="1">
    <location>
        <position position="119"/>
    </location>
    <ligand>
        <name>Fe cation</name>
        <dbReference type="ChEBI" id="CHEBI:24875"/>
    </ligand>
</feature>
<feature type="binding site" evidence="1">
    <location>
        <position position="123"/>
    </location>
    <ligand>
        <name>Fe cation</name>
        <dbReference type="ChEBI" id="CHEBI:24875"/>
    </ligand>
</feature>
<feature type="binding site" evidence="1">
    <location>
        <begin position="141"/>
        <end position="145"/>
    </location>
    <ligand>
        <name>substrate</name>
    </ligand>
</feature>
<feature type="binding site" evidence="1">
    <location>
        <position position="174"/>
    </location>
    <ligand>
        <name>substrate</name>
    </ligand>
</feature>
<feature type="binding site" evidence="1">
    <location>
        <position position="187"/>
    </location>
    <ligand>
        <name>substrate</name>
    </ligand>
</feature>
<feature type="binding site" evidence="1">
    <location>
        <position position="191"/>
    </location>
    <ligand>
        <name>substrate</name>
    </ligand>
</feature>
<feature type="binding site" evidence="1">
    <location>
        <position position="280"/>
    </location>
    <ligand>
        <name>substrate</name>
    </ligand>
</feature>
<feature type="binding site" evidence="1">
    <location>
        <position position="310"/>
    </location>
    <ligand>
        <name>Fe cation</name>
        <dbReference type="ChEBI" id="CHEBI:24875"/>
    </ligand>
</feature>
<evidence type="ECO:0000255" key="1">
    <source>
        <dbReference type="HAMAP-Rule" id="MF_01445"/>
    </source>
</evidence>
<reference key="1">
    <citation type="journal article" date="2003" name="Science">
        <title>Role of mobile DNA in the evolution of vancomycin-resistant Enterococcus faecalis.</title>
        <authorList>
            <person name="Paulsen I.T."/>
            <person name="Banerjei L."/>
            <person name="Myers G.S.A."/>
            <person name="Nelson K.E."/>
            <person name="Seshadri R."/>
            <person name="Read T.D."/>
            <person name="Fouts D.E."/>
            <person name="Eisen J.A."/>
            <person name="Gill S.R."/>
            <person name="Heidelberg J.F."/>
            <person name="Tettelin H."/>
            <person name="Dodson R.J."/>
            <person name="Umayam L.A."/>
            <person name="Brinkac L.M."/>
            <person name="Beanan M.J."/>
            <person name="Daugherty S.C."/>
            <person name="DeBoy R.T."/>
            <person name="Durkin S.A."/>
            <person name="Kolonay J.F."/>
            <person name="Madupu R."/>
            <person name="Nelson W.C."/>
            <person name="Vamathevan J.J."/>
            <person name="Tran B."/>
            <person name="Upton J."/>
            <person name="Hansen T."/>
            <person name="Shetty J."/>
            <person name="Khouri H.M."/>
            <person name="Utterback T.R."/>
            <person name="Radune D."/>
            <person name="Ketchum K.A."/>
            <person name="Dougherty B.A."/>
            <person name="Fraser C.M."/>
        </authorList>
    </citation>
    <scope>NUCLEOTIDE SEQUENCE [LARGE SCALE GENOMIC DNA]</scope>
    <source>
        <strain>ATCC 700802 / V583</strain>
    </source>
</reference>
<proteinExistence type="inferred from homology"/>
<comment type="function">
    <text evidence="1">Required for the formation of a threonylcarbamoyl group on adenosine at position 37 (t(6)A37) in tRNAs that read codons beginning with adenine. Is involved in the transfer of the threonylcarbamoyl moiety of threonylcarbamoyl-AMP (TC-AMP) to the N6 group of A37, together with TsaE and TsaB. TsaD likely plays a direct catalytic role in this reaction.</text>
</comment>
<comment type="catalytic activity">
    <reaction evidence="1">
        <text>L-threonylcarbamoyladenylate + adenosine(37) in tRNA = N(6)-L-threonylcarbamoyladenosine(37) in tRNA + AMP + H(+)</text>
        <dbReference type="Rhea" id="RHEA:37059"/>
        <dbReference type="Rhea" id="RHEA-COMP:10162"/>
        <dbReference type="Rhea" id="RHEA-COMP:10163"/>
        <dbReference type="ChEBI" id="CHEBI:15378"/>
        <dbReference type="ChEBI" id="CHEBI:73682"/>
        <dbReference type="ChEBI" id="CHEBI:74411"/>
        <dbReference type="ChEBI" id="CHEBI:74418"/>
        <dbReference type="ChEBI" id="CHEBI:456215"/>
        <dbReference type="EC" id="2.3.1.234"/>
    </reaction>
</comment>
<comment type="cofactor">
    <cofactor evidence="1">
        <name>Fe(2+)</name>
        <dbReference type="ChEBI" id="CHEBI:29033"/>
    </cofactor>
    <text evidence="1">Binds 1 Fe(2+) ion per subunit.</text>
</comment>
<comment type="subcellular location">
    <subcellularLocation>
        <location evidence="1">Cytoplasm</location>
    </subcellularLocation>
</comment>
<comment type="similarity">
    <text evidence="1">Belongs to the KAE1 / TsaD family.</text>
</comment>
<sequence>MTIFTKERKLLLAVESSCDETSVAVIEDGDKILSNIVASQIKSHQRFGGVVPEVASRHHVEQVTICIEEALTEAKVTPEELSGVAVTYGPGLVGALLIGLSAAKAFAWAHQLPLIPVNHMAGHIYAARFVAPLEFPLMALLVSGGHTELVYMKEDGSFEIVGETRDDAAGEAYDKVGRVLGLPYPSGKEIDALAHEGTDTYQFPRAMLKEDNYDFSFSGLKSAFINTVHNAEQRGEALSTKDLAASFQASVVEVLVTKTIRACQEYPVKQLLIAGGVAANQGLREAMRHAISEQLPAVTLLIPPLKLCGDNAAMIGAAAFIEAEKNHFASYNLNAEPGVSFMTISEEG</sequence>
<name>TSAD_ENTFA</name>
<dbReference type="EC" id="2.3.1.234" evidence="1"/>
<dbReference type="EMBL" id="AE016830">
    <property type="protein sequence ID" value="AAO82189.1"/>
    <property type="molecule type" value="Genomic_DNA"/>
</dbReference>
<dbReference type="RefSeq" id="NP_816119.1">
    <property type="nucleotide sequence ID" value="NC_004668.1"/>
</dbReference>
<dbReference type="RefSeq" id="WP_002370457.1">
    <property type="nucleotide sequence ID" value="NZ_KE136528.1"/>
</dbReference>
<dbReference type="SMR" id="Q831N0"/>
<dbReference type="STRING" id="226185.EF_2472"/>
<dbReference type="EnsemblBacteria" id="AAO82189">
    <property type="protein sequence ID" value="AAO82189"/>
    <property type="gene ID" value="EF_2472"/>
</dbReference>
<dbReference type="KEGG" id="efa:EF2472"/>
<dbReference type="PATRIC" id="fig|226185.45.peg.1075"/>
<dbReference type="eggNOG" id="COG0533">
    <property type="taxonomic scope" value="Bacteria"/>
</dbReference>
<dbReference type="HOGENOM" id="CLU_023208_0_2_9"/>
<dbReference type="Proteomes" id="UP000001415">
    <property type="component" value="Chromosome"/>
</dbReference>
<dbReference type="GO" id="GO:0005737">
    <property type="term" value="C:cytoplasm"/>
    <property type="evidence" value="ECO:0007669"/>
    <property type="project" value="UniProtKB-SubCell"/>
</dbReference>
<dbReference type="GO" id="GO:0005506">
    <property type="term" value="F:iron ion binding"/>
    <property type="evidence" value="ECO:0007669"/>
    <property type="project" value="UniProtKB-UniRule"/>
</dbReference>
<dbReference type="GO" id="GO:0061711">
    <property type="term" value="F:N(6)-L-threonylcarbamoyladenine synthase activity"/>
    <property type="evidence" value="ECO:0007669"/>
    <property type="project" value="UniProtKB-EC"/>
</dbReference>
<dbReference type="GO" id="GO:0002949">
    <property type="term" value="P:tRNA threonylcarbamoyladenosine modification"/>
    <property type="evidence" value="ECO:0007669"/>
    <property type="project" value="UniProtKB-UniRule"/>
</dbReference>
<dbReference type="CDD" id="cd24133">
    <property type="entry name" value="ASKHA_NBD_TsaD_bac"/>
    <property type="match status" value="1"/>
</dbReference>
<dbReference type="FunFam" id="3.30.420.40:FF:000012">
    <property type="entry name" value="tRNA N6-adenosine threonylcarbamoyltransferase"/>
    <property type="match status" value="1"/>
</dbReference>
<dbReference type="FunFam" id="3.30.420.40:FF:000040">
    <property type="entry name" value="tRNA N6-adenosine threonylcarbamoyltransferase"/>
    <property type="match status" value="1"/>
</dbReference>
<dbReference type="Gene3D" id="3.30.420.40">
    <property type="match status" value="2"/>
</dbReference>
<dbReference type="HAMAP" id="MF_01445">
    <property type="entry name" value="TsaD"/>
    <property type="match status" value="1"/>
</dbReference>
<dbReference type="InterPro" id="IPR043129">
    <property type="entry name" value="ATPase_NBD"/>
</dbReference>
<dbReference type="InterPro" id="IPR000905">
    <property type="entry name" value="Gcp-like_dom"/>
</dbReference>
<dbReference type="InterPro" id="IPR017861">
    <property type="entry name" value="KAE1/TsaD"/>
</dbReference>
<dbReference type="InterPro" id="IPR017860">
    <property type="entry name" value="Peptidase_M22_CS"/>
</dbReference>
<dbReference type="InterPro" id="IPR022450">
    <property type="entry name" value="TsaD"/>
</dbReference>
<dbReference type="NCBIfam" id="TIGR00329">
    <property type="entry name" value="gcp_kae1"/>
    <property type="match status" value="1"/>
</dbReference>
<dbReference type="NCBIfam" id="TIGR03723">
    <property type="entry name" value="T6A_TsaD_YgjD"/>
    <property type="match status" value="1"/>
</dbReference>
<dbReference type="PANTHER" id="PTHR11735">
    <property type="entry name" value="TRNA N6-ADENOSINE THREONYLCARBAMOYLTRANSFERASE"/>
    <property type="match status" value="1"/>
</dbReference>
<dbReference type="PANTHER" id="PTHR11735:SF6">
    <property type="entry name" value="TRNA N6-ADENOSINE THREONYLCARBAMOYLTRANSFERASE, MITOCHONDRIAL"/>
    <property type="match status" value="1"/>
</dbReference>
<dbReference type="Pfam" id="PF00814">
    <property type="entry name" value="TsaD"/>
    <property type="match status" value="1"/>
</dbReference>
<dbReference type="PRINTS" id="PR00789">
    <property type="entry name" value="OSIALOPTASE"/>
</dbReference>
<dbReference type="SUPFAM" id="SSF53067">
    <property type="entry name" value="Actin-like ATPase domain"/>
    <property type="match status" value="2"/>
</dbReference>
<dbReference type="PROSITE" id="PS01016">
    <property type="entry name" value="GLYCOPROTEASE"/>
    <property type="match status" value="1"/>
</dbReference>
<organism>
    <name type="scientific">Enterococcus faecalis (strain ATCC 700802 / V583)</name>
    <dbReference type="NCBI Taxonomy" id="226185"/>
    <lineage>
        <taxon>Bacteria</taxon>
        <taxon>Bacillati</taxon>
        <taxon>Bacillota</taxon>
        <taxon>Bacilli</taxon>
        <taxon>Lactobacillales</taxon>
        <taxon>Enterococcaceae</taxon>
        <taxon>Enterococcus</taxon>
    </lineage>
</organism>
<gene>
    <name evidence="1" type="primary">tsaD</name>
    <name type="synonym">gcp</name>
    <name type="ordered locus">EF_2472</name>
</gene>
<accession>Q831N0</accession>
<protein>
    <recommendedName>
        <fullName evidence="1">tRNA N6-adenosine threonylcarbamoyltransferase</fullName>
        <ecNumber evidence="1">2.3.1.234</ecNumber>
    </recommendedName>
    <alternativeName>
        <fullName evidence="1">N6-L-threonylcarbamoyladenine synthase</fullName>
        <shortName evidence="1">t(6)A synthase</shortName>
    </alternativeName>
    <alternativeName>
        <fullName evidence="1">t(6)A37 threonylcarbamoyladenosine biosynthesis protein TsaD</fullName>
    </alternativeName>
    <alternativeName>
        <fullName evidence="1">tRNA threonylcarbamoyladenosine biosynthesis protein TsaD</fullName>
    </alternativeName>
</protein>
<keyword id="KW-0012">Acyltransferase</keyword>
<keyword id="KW-0963">Cytoplasm</keyword>
<keyword id="KW-0408">Iron</keyword>
<keyword id="KW-0479">Metal-binding</keyword>
<keyword id="KW-1185">Reference proteome</keyword>
<keyword id="KW-0808">Transferase</keyword>
<keyword id="KW-0819">tRNA processing</keyword>